<keyword id="KW-1005">Bacterial flagellum biogenesis</keyword>
<keyword id="KW-0143">Chaperone</keyword>
<keyword id="KW-0963">Cytoplasm</keyword>
<keyword id="KW-0810">Translation regulation</keyword>
<evidence type="ECO:0000255" key="1">
    <source>
        <dbReference type="HAMAP-Rule" id="MF_01185"/>
    </source>
</evidence>
<proteinExistence type="inferred from homology"/>
<name>FLIW_BORRA</name>
<organism>
    <name type="scientific">Borrelia recurrentis (strain A1)</name>
    <dbReference type="NCBI Taxonomy" id="412418"/>
    <lineage>
        <taxon>Bacteria</taxon>
        <taxon>Pseudomonadati</taxon>
        <taxon>Spirochaetota</taxon>
        <taxon>Spirochaetia</taxon>
        <taxon>Spirochaetales</taxon>
        <taxon>Borreliaceae</taxon>
        <taxon>Borrelia</taxon>
    </lineage>
</organism>
<feature type="chain" id="PRO_1000138252" description="Flagellar assembly factor FliW">
    <location>
        <begin position="1"/>
        <end position="130"/>
    </location>
</feature>
<comment type="function">
    <text evidence="1">Acts as an anti-CsrA protein, binds CsrA and prevents it from repressing translation of its target genes, one of which is flagellin. Binds to flagellin and participates in the assembly of the flagellum.</text>
</comment>
<comment type="subunit">
    <text evidence="1">Interacts with translational regulator CsrA and flagellin(s).</text>
</comment>
<comment type="subcellular location">
    <subcellularLocation>
        <location evidence="1">Cytoplasm</location>
    </subcellularLocation>
</comment>
<comment type="similarity">
    <text evidence="1">Belongs to the FliW family.</text>
</comment>
<reference key="1">
    <citation type="journal article" date="2008" name="PLoS Genet.">
        <title>The genome of Borrelia recurrentis, the agent of deadly louse-borne relapsing fever, is a degraded subset of tick-borne Borrelia duttonii.</title>
        <authorList>
            <person name="Lescot M."/>
            <person name="Audic S."/>
            <person name="Robert C."/>
            <person name="Nguyen T.T."/>
            <person name="Blanc G."/>
            <person name="Cutler S.J."/>
            <person name="Wincker P."/>
            <person name="Couloux A."/>
            <person name="Claverie J.-M."/>
            <person name="Raoult D."/>
            <person name="Drancourt M."/>
        </authorList>
    </citation>
    <scope>NUCLEOTIDE SEQUENCE [LARGE SCALE GENOMIC DNA]</scope>
    <source>
        <strain>A1</strain>
    </source>
</reference>
<dbReference type="EMBL" id="CP000993">
    <property type="protein sequence ID" value="ACH94436.1"/>
    <property type="molecule type" value="Genomic_DNA"/>
</dbReference>
<dbReference type="RefSeq" id="WP_012537950.1">
    <property type="nucleotide sequence ID" value="NZ_CP169983.1"/>
</dbReference>
<dbReference type="SMR" id="B5RR02"/>
<dbReference type="KEGG" id="bre:BRE_181"/>
<dbReference type="HOGENOM" id="CLU_112356_0_2_12"/>
<dbReference type="Proteomes" id="UP000000612">
    <property type="component" value="Chromosome"/>
</dbReference>
<dbReference type="GO" id="GO:0005737">
    <property type="term" value="C:cytoplasm"/>
    <property type="evidence" value="ECO:0007669"/>
    <property type="project" value="UniProtKB-SubCell"/>
</dbReference>
<dbReference type="GO" id="GO:0044780">
    <property type="term" value="P:bacterial-type flagellum assembly"/>
    <property type="evidence" value="ECO:0007669"/>
    <property type="project" value="UniProtKB-UniRule"/>
</dbReference>
<dbReference type="GO" id="GO:0006417">
    <property type="term" value="P:regulation of translation"/>
    <property type="evidence" value="ECO:0007669"/>
    <property type="project" value="UniProtKB-KW"/>
</dbReference>
<dbReference type="Gene3D" id="2.30.290.10">
    <property type="entry name" value="BH3618-like"/>
    <property type="match status" value="1"/>
</dbReference>
<dbReference type="HAMAP" id="MF_01185">
    <property type="entry name" value="FliW"/>
    <property type="match status" value="1"/>
</dbReference>
<dbReference type="InterPro" id="IPR003775">
    <property type="entry name" value="Flagellar_assembly_factor_FliW"/>
</dbReference>
<dbReference type="InterPro" id="IPR024046">
    <property type="entry name" value="Flagellar_assmbl_FliW_dom_sf"/>
</dbReference>
<dbReference type="NCBIfam" id="NF009793">
    <property type="entry name" value="PRK13285.1-1"/>
    <property type="match status" value="1"/>
</dbReference>
<dbReference type="PANTHER" id="PTHR39190">
    <property type="entry name" value="FLAGELLAR ASSEMBLY FACTOR FLIW"/>
    <property type="match status" value="1"/>
</dbReference>
<dbReference type="PANTHER" id="PTHR39190:SF1">
    <property type="entry name" value="FLAGELLAR ASSEMBLY FACTOR FLIW"/>
    <property type="match status" value="1"/>
</dbReference>
<dbReference type="Pfam" id="PF02623">
    <property type="entry name" value="FliW"/>
    <property type="match status" value="1"/>
</dbReference>
<dbReference type="SUPFAM" id="SSF141457">
    <property type="entry name" value="BH3618-like"/>
    <property type="match status" value="1"/>
</dbReference>
<protein>
    <recommendedName>
        <fullName evidence="1">Flagellar assembly factor FliW</fullName>
    </recommendedName>
</protein>
<sequence length="130" mass="15275">MKNKFSIKVKFPEGILGFEDIKEFIIKDSAHKPFSIMQSINGEINFLVTSPFNFLEKYLPNIENKDWLDIQAENENEKVILCIINMHVKNYKEITANLKAPIILNKKKLIGKQAISTNEEHYLRYRVFKE</sequence>
<gene>
    <name evidence="1" type="primary">fliW</name>
    <name type="ordered locus">BRE_181</name>
</gene>
<accession>B5RR02</accession>